<feature type="chain" id="PRO_1000051148" description="Small ribosomal subunit protein uS9">
    <location>
        <begin position="1"/>
        <end position="130"/>
    </location>
</feature>
<name>RS9_ACISJ</name>
<gene>
    <name evidence="1" type="primary">rpsI</name>
    <name type="ordered locus">Ajs_0626</name>
</gene>
<proteinExistence type="inferred from homology"/>
<sequence length="130" mass="14262">MIGEWNNGTGRRKSSVARVFLKKGSGKITVNGKDIQQYFGRETSIMIAKQPLALTNHVETFDIQINVHGGGESGQAGAARHGITRALIDYDATLKPALSQAGFVTRDAREVERKKVGLHSARRAKQFSKR</sequence>
<organism>
    <name type="scientific">Acidovorax sp. (strain JS42)</name>
    <dbReference type="NCBI Taxonomy" id="232721"/>
    <lineage>
        <taxon>Bacteria</taxon>
        <taxon>Pseudomonadati</taxon>
        <taxon>Pseudomonadota</taxon>
        <taxon>Betaproteobacteria</taxon>
        <taxon>Burkholderiales</taxon>
        <taxon>Comamonadaceae</taxon>
        <taxon>Acidovorax</taxon>
    </lineage>
</organism>
<dbReference type="EMBL" id="CP000539">
    <property type="protein sequence ID" value="ABM40873.1"/>
    <property type="molecule type" value="Genomic_DNA"/>
</dbReference>
<dbReference type="SMR" id="A1W3P8"/>
<dbReference type="STRING" id="232721.Ajs_0626"/>
<dbReference type="KEGG" id="ajs:Ajs_0626"/>
<dbReference type="eggNOG" id="COG0103">
    <property type="taxonomic scope" value="Bacteria"/>
</dbReference>
<dbReference type="HOGENOM" id="CLU_046483_2_1_4"/>
<dbReference type="Proteomes" id="UP000000645">
    <property type="component" value="Chromosome"/>
</dbReference>
<dbReference type="GO" id="GO:0022627">
    <property type="term" value="C:cytosolic small ribosomal subunit"/>
    <property type="evidence" value="ECO:0007669"/>
    <property type="project" value="TreeGrafter"/>
</dbReference>
<dbReference type="GO" id="GO:0003723">
    <property type="term" value="F:RNA binding"/>
    <property type="evidence" value="ECO:0007669"/>
    <property type="project" value="TreeGrafter"/>
</dbReference>
<dbReference type="GO" id="GO:0003735">
    <property type="term" value="F:structural constituent of ribosome"/>
    <property type="evidence" value="ECO:0007669"/>
    <property type="project" value="InterPro"/>
</dbReference>
<dbReference type="GO" id="GO:0006412">
    <property type="term" value="P:translation"/>
    <property type="evidence" value="ECO:0007669"/>
    <property type="project" value="UniProtKB-UniRule"/>
</dbReference>
<dbReference type="FunFam" id="3.30.230.10:FF:000001">
    <property type="entry name" value="30S ribosomal protein S9"/>
    <property type="match status" value="1"/>
</dbReference>
<dbReference type="Gene3D" id="3.30.230.10">
    <property type="match status" value="1"/>
</dbReference>
<dbReference type="HAMAP" id="MF_00532_B">
    <property type="entry name" value="Ribosomal_uS9_B"/>
    <property type="match status" value="1"/>
</dbReference>
<dbReference type="InterPro" id="IPR020568">
    <property type="entry name" value="Ribosomal_Su5_D2-typ_SF"/>
</dbReference>
<dbReference type="InterPro" id="IPR000754">
    <property type="entry name" value="Ribosomal_uS9"/>
</dbReference>
<dbReference type="InterPro" id="IPR023035">
    <property type="entry name" value="Ribosomal_uS9_bac/plastid"/>
</dbReference>
<dbReference type="InterPro" id="IPR020574">
    <property type="entry name" value="Ribosomal_uS9_CS"/>
</dbReference>
<dbReference type="InterPro" id="IPR014721">
    <property type="entry name" value="Ribsml_uS5_D2-typ_fold_subgr"/>
</dbReference>
<dbReference type="NCBIfam" id="NF001099">
    <property type="entry name" value="PRK00132.1"/>
    <property type="match status" value="1"/>
</dbReference>
<dbReference type="PANTHER" id="PTHR21569">
    <property type="entry name" value="RIBOSOMAL PROTEIN S9"/>
    <property type="match status" value="1"/>
</dbReference>
<dbReference type="PANTHER" id="PTHR21569:SF1">
    <property type="entry name" value="SMALL RIBOSOMAL SUBUNIT PROTEIN US9M"/>
    <property type="match status" value="1"/>
</dbReference>
<dbReference type="Pfam" id="PF00380">
    <property type="entry name" value="Ribosomal_S9"/>
    <property type="match status" value="1"/>
</dbReference>
<dbReference type="SUPFAM" id="SSF54211">
    <property type="entry name" value="Ribosomal protein S5 domain 2-like"/>
    <property type="match status" value="1"/>
</dbReference>
<dbReference type="PROSITE" id="PS00360">
    <property type="entry name" value="RIBOSOMAL_S9"/>
    <property type="match status" value="1"/>
</dbReference>
<comment type="similarity">
    <text evidence="1">Belongs to the universal ribosomal protein uS9 family.</text>
</comment>
<evidence type="ECO:0000255" key="1">
    <source>
        <dbReference type="HAMAP-Rule" id="MF_00532"/>
    </source>
</evidence>
<evidence type="ECO:0000305" key="2"/>
<reference key="1">
    <citation type="submission" date="2006-12" db="EMBL/GenBank/DDBJ databases">
        <title>Complete sequence of chromosome 1 of Acidovorax sp. JS42.</title>
        <authorList>
            <person name="Copeland A."/>
            <person name="Lucas S."/>
            <person name="Lapidus A."/>
            <person name="Barry K."/>
            <person name="Detter J.C."/>
            <person name="Glavina del Rio T."/>
            <person name="Dalin E."/>
            <person name="Tice H."/>
            <person name="Pitluck S."/>
            <person name="Chertkov O."/>
            <person name="Brettin T."/>
            <person name="Bruce D."/>
            <person name="Han C."/>
            <person name="Tapia R."/>
            <person name="Gilna P."/>
            <person name="Schmutz J."/>
            <person name="Larimer F."/>
            <person name="Land M."/>
            <person name="Hauser L."/>
            <person name="Kyrpides N."/>
            <person name="Kim E."/>
            <person name="Stahl D."/>
            <person name="Richardson P."/>
        </authorList>
    </citation>
    <scope>NUCLEOTIDE SEQUENCE [LARGE SCALE GENOMIC DNA]</scope>
    <source>
        <strain>JS42</strain>
    </source>
</reference>
<accession>A1W3P8</accession>
<keyword id="KW-0687">Ribonucleoprotein</keyword>
<keyword id="KW-0689">Ribosomal protein</keyword>
<protein>
    <recommendedName>
        <fullName evidence="1">Small ribosomal subunit protein uS9</fullName>
    </recommendedName>
    <alternativeName>
        <fullName evidence="2">30S ribosomal protein S9</fullName>
    </alternativeName>
</protein>